<feature type="chain" id="PRO_1000016793" description="Queuine tRNA-ribosyltransferase">
    <location>
        <begin position="1"/>
        <end position="367"/>
    </location>
</feature>
<feature type="region of interest" description="RNA binding" evidence="1">
    <location>
        <begin position="246"/>
        <end position="252"/>
    </location>
</feature>
<feature type="active site" description="Proton acceptor" evidence="1">
    <location>
        <position position="92"/>
    </location>
</feature>
<feature type="active site" description="Nucleophile" evidence="1">
    <location>
        <position position="265"/>
    </location>
</feature>
<feature type="binding site" evidence="1">
    <location>
        <begin position="92"/>
        <end position="96"/>
    </location>
    <ligand>
        <name>substrate</name>
    </ligand>
</feature>
<feature type="binding site" evidence="1">
    <location>
        <position position="146"/>
    </location>
    <ligand>
        <name>substrate</name>
    </ligand>
</feature>
<feature type="binding site" evidence="1">
    <location>
        <position position="188"/>
    </location>
    <ligand>
        <name>substrate</name>
    </ligand>
</feature>
<feature type="binding site" evidence="1">
    <location>
        <position position="215"/>
    </location>
    <ligand>
        <name>substrate</name>
    </ligand>
</feature>
<feature type="binding site" evidence="1">
    <location>
        <position position="303"/>
    </location>
    <ligand>
        <name>Zn(2+)</name>
        <dbReference type="ChEBI" id="CHEBI:29105"/>
    </ligand>
</feature>
<feature type="binding site" evidence="1">
    <location>
        <position position="305"/>
    </location>
    <ligand>
        <name>Zn(2+)</name>
        <dbReference type="ChEBI" id="CHEBI:29105"/>
    </ligand>
</feature>
<feature type="binding site" evidence="1">
    <location>
        <position position="308"/>
    </location>
    <ligand>
        <name>Zn(2+)</name>
        <dbReference type="ChEBI" id="CHEBI:29105"/>
    </ligand>
</feature>
<feature type="binding site" evidence="1">
    <location>
        <position position="334"/>
    </location>
    <ligand>
        <name>Zn(2+)</name>
        <dbReference type="ChEBI" id="CHEBI:29105"/>
    </ligand>
</feature>
<gene>
    <name evidence="1" type="primary">tgt</name>
    <name type="ordered locus">FTN_1100</name>
</gene>
<sequence length="367" mass="41451">MTVMKFDLIKKEGKARRGKISFPRGDIQTPAFMPVGTYGAVKSLSPVELKEMGAEIILGNTFHLWLRPGTEIIKKHGSLHGFNGWDKPILTDSGGFQVFSLGKMRKLTEEGVTFKSPINGSKVFLSPEISMQVQRDLGSDIVMCFDECTPYPATEKEAKESMELSMRWAKRSKDAHGDNPSALFGIIQGGMYEHLRDESLAKLKEIDFDGFAIGGLSVGEPKEDMIRILDHTAHQMPEDKPRYLMGVGTPKDLVEAVYRGVDMFDCVMPSRNARNGHIFTSEGVIKIRNSKYKDDTSPLDPNCDCYTCKNFTKSYLHHLDKTKEILGSRLNTIHNLTFYQNLMKSIRKALDEGRFAEFRKEFLANYK</sequence>
<name>TGT_FRATN</name>
<proteinExistence type="inferred from homology"/>
<comment type="function">
    <text evidence="1">Catalyzes the base-exchange of a guanine (G) residue with the queuine precursor 7-aminomethyl-7-deazaguanine (PreQ1) at position 34 (anticodon wobble position) in tRNAs with GU(N) anticodons (tRNA-Asp, -Asn, -His and -Tyr). Catalysis occurs through a double-displacement mechanism. The nucleophile active site attacks the C1' of nucleotide 34 to detach the guanine base from the RNA, forming a covalent enzyme-RNA intermediate. The proton acceptor active site deprotonates the incoming PreQ1, allowing a nucleophilic attack on the C1' of the ribose to form the product. After dissociation, two additional enzymatic reactions on the tRNA convert PreQ1 to queuine (Q), resulting in the hypermodified nucleoside queuosine (7-(((4,5-cis-dihydroxy-2-cyclopenten-1-yl)amino)methyl)-7-deazaguanosine).</text>
</comment>
<comment type="catalytic activity">
    <reaction evidence="1">
        <text>7-aminomethyl-7-carbaguanine + guanosine(34) in tRNA = 7-aminomethyl-7-carbaguanosine(34) in tRNA + guanine</text>
        <dbReference type="Rhea" id="RHEA:24104"/>
        <dbReference type="Rhea" id="RHEA-COMP:10341"/>
        <dbReference type="Rhea" id="RHEA-COMP:10342"/>
        <dbReference type="ChEBI" id="CHEBI:16235"/>
        <dbReference type="ChEBI" id="CHEBI:58703"/>
        <dbReference type="ChEBI" id="CHEBI:74269"/>
        <dbReference type="ChEBI" id="CHEBI:82833"/>
        <dbReference type="EC" id="2.4.2.29"/>
    </reaction>
</comment>
<comment type="cofactor">
    <cofactor evidence="1">
        <name>Zn(2+)</name>
        <dbReference type="ChEBI" id="CHEBI:29105"/>
    </cofactor>
    <text evidence="1">Binds 1 zinc ion per subunit.</text>
</comment>
<comment type="pathway">
    <text evidence="1">tRNA modification; tRNA-queuosine biosynthesis.</text>
</comment>
<comment type="subunit">
    <text evidence="1">Homodimer. Within each dimer, one monomer is responsible for RNA recognition and catalysis, while the other monomer binds to the replacement base PreQ1.</text>
</comment>
<comment type="similarity">
    <text evidence="1">Belongs to the queuine tRNA-ribosyltransferase family.</text>
</comment>
<dbReference type="EC" id="2.4.2.29" evidence="1"/>
<dbReference type="EMBL" id="CP000439">
    <property type="protein sequence ID" value="ABK89986.1"/>
    <property type="molecule type" value="Genomic_DNA"/>
</dbReference>
<dbReference type="RefSeq" id="WP_003039713.1">
    <property type="nucleotide sequence ID" value="NC_008601.1"/>
</dbReference>
<dbReference type="SMR" id="A0Q6X1"/>
<dbReference type="KEGG" id="ftn:FTN_1100"/>
<dbReference type="BioCyc" id="FTUL401614:G1G75-1142-MONOMER"/>
<dbReference type="UniPathway" id="UPA00392"/>
<dbReference type="Proteomes" id="UP000000762">
    <property type="component" value="Chromosome"/>
</dbReference>
<dbReference type="GO" id="GO:0005829">
    <property type="term" value="C:cytosol"/>
    <property type="evidence" value="ECO:0007669"/>
    <property type="project" value="TreeGrafter"/>
</dbReference>
<dbReference type="GO" id="GO:0046872">
    <property type="term" value="F:metal ion binding"/>
    <property type="evidence" value="ECO:0007669"/>
    <property type="project" value="UniProtKB-KW"/>
</dbReference>
<dbReference type="GO" id="GO:0008479">
    <property type="term" value="F:tRNA-guanosine(34) queuine transglycosylase activity"/>
    <property type="evidence" value="ECO:0007669"/>
    <property type="project" value="UniProtKB-UniRule"/>
</dbReference>
<dbReference type="GO" id="GO:0008616">
    <property type="term" value="P:queuosine biosynthetic process"/>
    <property type="evidence" value="ECO:0007669"/>
    <property type="project" value="UniProtKB-UniRule"/>
</dbReference>
<dbReference type="GO" id="GO:0002099">
    <property type="term" value="P:tRNA wobble guanine modification"/>
    <property type="evidence" value="ECO:0007669"/>
    <property type="project" value="TreeGrafter"/>
</dbReference>
<dbReference type="GO" id="GO:0101030">
    <property type="term" value="P:tRNA-guanine transglycosylation"/>
    <property type="evidence" value="ECO:0007669"/>
    <property type="project" value="InterPro"/>
</dbReference>
<dbReference type="FunFam" id="3.20.20.105:FF:000001">
    <property type="entry name" value="Queuine tRNA-ribosyltransferase"/>
    <property type="match status" value="1"/>
</dbReference>
<dbReference type="Gene3D" id="3.20.20.105">
    <property type="entry name" value="Queuine tRNA-ribosyltransferase-like"/>
    <property type="match status" value="1"/>
</dbReference>
<dbReference type="HAMAP" id="MF_00168">
    <property type="entry name" value="Q_tRNA_Tgt"/>
    <property type="match status" value="1"/>
</dbReference>
<dbReference type="InterPro" id="IPR050076">
    <property type="entry name" value="ArchSynthase1/Queuine_TRR"/>
</dbReference>
<dbReference type="InterPro" id="IPR004803">
    <property type="entry name" value="TGT"/>
</dbReference>
<dbReference type="InterPro" id="IPR036511">
    <property type="entry name" value="TGT-like_sf"/>
</dbReference>
<dbReference type="InterPro" id="IPR002616">
    <property type="entry name" value="tRNA_ribo_trans-like"/>
</dbReference>
<dbReference type="NCBIfam" id="TIGR00430">
    <property type="entry name" value="Q_tRNA_tgt"/>
    <property type="match status" value="1"/>
</dbReference>
<dbReference type="NCBIfam" id="TIGR00449">
    <property type="entry name" value="tgt_general"/>
    <property type="match status" value="1"/>
</dbReference>
<dbReference type="PANTHER" id="PTHR46499">
    <property type="entry name" value="QUEUINE TRNA-RIBOSYLTRANSFERASE"/>
    <property type="match status" value="1"/>
</dbReference>
<dbReference type="PANTHER" id="PTHR46499:SF1">
    <property type="entry name" value="QUEUINE TRNA-RIBOSYLTRANSFERASE"/>
    <property type="match status" value="1"/>
</dbReference>
<dbReference type="Pfam" id="PF01702">
    <property type="entry name" value="TGT"/>
    <property type="match status" value="1"/>
</dbReference>
<dbReference type="SUPFAM" id="SSF51713">
    <property type="entry name" value="tRNA-guanine transglycosylase"/>
    <property type="match status" value="1"/>
</dbReference>
<protein>
    <recommendedName>
        <fullName evidence="1">Queuine tRNA-ribosyltransferase</fullName>
        <ecNumber evidence="1">2.4.2.29</ecNumber>
    </recommendedName>
    <alternativeName>
        <fullName evidence="1">Guanine insertion enzyme</fullName>
    </alternativeName>
    <alternativeName>
        <fullName evidence="1">tRNA-guanine transglycosylase</fullName>
    </alternativeName>
</protein>
<keyword id="KW-0328">Glycosyltransferase</keyword>
<keyword id="KW-0479">Metal-binding</keyword>
<keyword id="KW-0671">Queuosine biosynthesis</keyword>
<keyword id="KW-0808">Transferase</keyword>
<keyword id="KW-0819">tRNA processing</keyword>
<keyword id="KW-0862">Zinc</keyword>
<evidence type="ECO:0000255" key="1">
    <source>
        <dbReference type="HAMAP-Rule" id="MF_00168"/>
    </source>
</evidence>
<reference key="1">
    <citation type="journal article" date="2007" name="Genome Biol.">
        <title>Comparison of Francisella tularensis genomes reveals evolutionary events associated with the emergence of human pathogenic strains.</title>
        <authorList>
            <person name="Rohmer L."/>
            <person name="Fong C."/>
            <person name="Abmayr S."/>
            <person name="Wasnick M."/>
            <person name="Larson Freeman T.J."/>
            <person name="Radey M."/>
            <person name="Guina T."/>
            <person name="Svensson K."/>
            <person name="Hayden H.S."/>
            <person name="Jacobs M."/>
            <person name="Gallagher L.A."/>
            <person name="Manoil C."/>
            <person name="Ernst R.K."/>
            <person name="Drees B."/>
            <person name="Buckley D."/>
            <person name="Haugen E."/>
            <person name="Bovee D."/>
            <person name="Zhou Y."/>
            <person name="Chang J."/>
            <person name="Levy R."/>
            <person name="Lim R."/>
            <person name="Gillett W."/>
            <person name="Guenthener D."/>
            <person name="Kang A."/>
            <person name="Shaffer S.A."/>
            <person name="Taylor G."/>
            <person name="Chen J."/>
            <person name="Gallis B."/>
            <person name="D'Argenio D.A."/>
            <person name="Forsman M."/>
            <person name="Olson M.V."/>
            <person name="Goodlett D.R."/>
            <person name="Kaul R."/>
            <person name="Miller S.I."/>
            <person name="Brittnacher M.J."/>
        </authorList>
    </citation>
    <scope>NUCLEOTIDE SEQUENCE [LARGE SCALE GENOMIC DNA]</scope>
    <source>
        <strain>U112</strain>
    </source>
</reference>
<organism>
    <name type="scientific">Francisella tularensis subsp. novicida (strain U112)</name>
    <dbReference type="NCBI Taxonomy" id="401614"/>
    <lineage>
        <taxon>Bacteria</taxon>
        <taxon>Pseudomonadati</taxon>
        <taxon>Pseudomonadota</taxon>
        <taxon>Gammaproteobacteria</taxon>
        <taxon>Thiotrichales</taxon>
        <taxon>Francisellaceae</taxon>
        <taxon>Francisella</taxon>
    </lineage>
</organism>
<accession>A0Q6X1</accession>